<organism>
    <name type="scientific">Clostridium perfringens (strain 13 / Type A)</name>
    <dbReference type="NCBI Taxonomy" id="195102"/>
    <lineage>
        <taxon>Bacteria</taxon>
        <taxon>Bacillati</taxon>
        <taxon>Bacillota</taxon>
        <taxon>Clostridia</taxon>
        <taxon>Eubacteriales</taxon>
        <taxon>Clostridiaceae</taxon>
        <taxon>Clostridium</taxon>
    </lineage>
</organism>
<protein>
    <recommendedName>
        <fullName>Rubrerythrin</fullName>
        <shortName>Rr</shortName>
    </recommendedName>
</protein>
<dbReference type="EMBL" id="X92844">
    <property type="protein sequence ID" value="CAA63429.1"/>
    <property type="molecule type" value="Genomic_DNA"/>
</dbReference>
<dbReference type="EMBL" id="BA000016">
    <property type="protein sequence ID" value="BAB79841.1"/>
    <property type="molecule type" value="Genomic_DNA"/>
</dbReference>
<dbReference type="RefSeq" id="WP_011009633.1">
    <property type="nucleotide sequence ID" value="NC_003366.1"/>
</dbReference>
<dbReference type="SMR" id="P51591"/>
<dbReference type="STRING" id="195102.gene:10489379"/>
<dbReference type="KEGG" id="cpe:CPE0135"/>
<dbReference type="HOGENOM" id="CLU_095256_0_1_9"/>
<dbReference type="Proteomes" id="UP000000818">
    <property type="component" value="Chromosome"/>
</dbReference>
<dbReference type="GO" id="GO:0005737">
    <property type="term" value="C:cytoplasm"/>
    <property type="evidence" value="ECO:0007669"/>
    <property type="project" value="UniProtKB-SubCell"/>
</dbReference>
<dbReference type="GO" id="GO:0005506">
    <property type="term" value="F:iron ion binding"/>
    <property type="evidence" value="ECO:0007669"/>
    <property type="project" value="InterPro"/>
</dbReference>
<dbReference type="GO" id="GO:0016491">
    <property type="term" value="F:oxidoreductase activity"/>
    <property type="evidence" value="ECO:0007669"/>
    <property type="project" value="InterPro"/>
</dbReference>
<dbReference type="CDD" id="cd00729">
    <property type="entry name" value="rubredoxin_SM"/>
    <property type="match status" value="1"/>
</dbReference>
<dbReference type="CDD" id="cd01041">
    <property type="entry name" value="Rubrerythrin"/>
    <property type="match status" value="1"/>
</dbReference>
<dbReference type="Gene3D" id="1.20.1260.10">
    <property type="match status" value="1"/>
</dbReference>
<dbReference type="Gene3D" id="2.20.28.10">
    <property type="match status" value="1"/>
</dbReference>
<dbReference type="InterPro" id="IPR012347">
    <property type="entry name" value="Ferritin-like"/>
</dbReference>
<dbReference type="InterPro" id="IPR009040">
    <property type="entry name" value="Ferritin-like_diiron"/>
</dbReference>
<dbReference type="InterPro" id="IPR009078">
    <property type="entry name" value="Ferritin-like_SF"/>
</dbReference>
<dbReference type="InterPro" id="IPR003251">
    <property type="entry name" value="Rr_diiron-bd_dom"/>
</dbReference>
<dbReference type="InterPro" id="IPR024934">
    <property type="entry name" value="Rubredoxin-like_dom"/>
</dbReference>
<dbReference type="InterPro" id="IPR052364">
    <property type="entry name" value="Rubrerythrin"/>
</dbReference>
<dbReference type="InterPro" id="IPR048574">
    <property type="entry name" value="RUBY_RBDX"/>
</dbReference>
<dbReference type="NCBIfam" id="NF045767">
    <property type="entry name" value="RuberyRbr"/>
    <property type="match status" value="1"/>
</dbReference>
<dbReference type="PANTHER" id="PTHR43865">
    <property type="entry name" value="RUBRERYTHRIN-RELATED"/>
    <property type="match status" value="1"/>
</dbReference>
<dbReference type="PANTHER" id="PTHR43865:SF1">
    <property type="entry name" value="RUBRERYTHRIN-RELATED"/>
    <property type="match status" value="1"/>
</dbReference>
<dbReference type="Pfam" id="PF02915">
    <property type="entry name" value="Rubrerythrin"/>
    <property type="match status" value="1"/>
</dbReference>
<dbReference type="Pfam" id="PF21349">
    <property type="entry name" value="RUBY_RBDX"/>
    <property type="match status" value="1"/>
</dbReference>
<dbReference type="SUPFAM" id="SSF47240">
    <property type="entry name" value="Ferritin-like"/>
    <property type="match status" value="1"/>
</dbReference>
<dbReference type="SUPFAM" id="SSF57802">
    <property type="entry name" value="Rubredoxin-like"/>
    <property type="match status" value="1"/>
</dbReference>
<dbReference type="PROSITE" id="PS50905">
    <property type="entry name" value="FERRITIN_LIKE"/>
    <property type="match status" value="1"/>
</dbReference>
<dbReference type="PROSITE" id="PS50903">
    <property type="entry name" value="RUBREDOXIN_LIKE"/>
    <property type="match status" value="1"/>
</dbReference>
<comment type="function">
    <text evidence="1">May provide oxidative stress protection via catalytic reduction of intracellular hydrogen peroxide.</text>
</comment>
<comment type="cofactor">
    <cofactor evidence="1">
        <name>Fe(3+)</name>
        <dbReference type="ChEBI" id="CHEBI:29034"/>
    </cofactor>
    <text evidence="1">Binds 3 Fe(3+) ions per subunit.</text>
</comment>
<comment type="subunit">
    <text>Homodimer. Possesses two rubredoxin-like centers and two non-sulfur oxo-bridged di-iron centers per dimer.</text>
</comment>
<comment type="subcellular location">
    <subcellularLocation>
        <location evidence="5">Cytoplasm</location>
    </subcellularLocation>
</comment>
<proteinExistence type="inferred from homology"/>
<feature type="chain" id="PRO_0000135065" description="Rubrerythrin">
    <location>
        <begin position="1"/>
        <end position="195"/>
    </location>
</feature>
<feature type="domain" description="Ferritin-like diiron" evidence="3">
    <location>
        <begin position="1"/>
        <end position="150"/>
    </location>
</feature>
<feature type="domain" description="Rubredoxin-like" evidence="4">
    <location>
        <begin position="157"/>
        <end position="195"/>
    </location>
</feature>
<feature type="binding site" evidence="2">
    <location>
        <position position="20"/>
    </location>
    <ligand>
        <name>Fe(3+)</name>
        <dbReference type="ChEBI" id="CHEBI:29034"/>
        <label>1</label>
    </ligand>
</feature>
<feature type="binding site" evidence="2">
    <location>
        <position position="53"/>
    </location>
    <ligand>
        <name>Fe(3+)</name>
        <dbReference type="ChEBI" id="CHEBI:29034"/>
        <label>1</label>
    </ligand>
</feature>
<feature type="binding site" evidence="2">
    <location>
        <position position="53"/>
    </location>
    <ligand>
        <name>Fe(3+)</name>
        <dbReference type="ChEBI" id="CHEBI:29034"/>
        <label>2</label>
    </ligand>
</feature>
<feature type="binding site" evidence="2">
    <location>
        <position position="98"/>
    </location>
    <ligand>
        <name>Fe(3+)</name>
        <dbReference type="ChEBI" id="CHEBI:29034"/>
        <label>2</label>
    </ligand>
</feature>
<feature type="binding site" evidence="2">
    <location>
        <position position="101"/>
    </location>
    <ligand>
        <name>Fe(3+)</name>
        <dbReference type="ChEBI" id="CHEBI:29034"/>
        <label>1</label>
    </ligand>
</feature>
<feature type="binding site" evidence="2">
    <location>
        <position position="132"/>
    </location>
    <ligand>
        <name>Fe(3+)</name>
        <dbReference type="ChEBI" id="CHEBI:29034"/>
        <label>1</label>
    </ligand>
</feature>
<feature type="binding site" evidence="2">
    <location>
        <position position="132"/>
    </location>
    <ligand>
        <name>Fe(3+)</name>
        <dbReference type="ChEBI" id="CHEBI:29034"/>
        <label>2</label>
    </ligand>
</feature>
<feature type="binding site" evidence="2">
    <location>
        <position position="135"/>
    </location>
    <ligand>
        <name>Fe(3+)</name>
        <dbReference type="ChEBI" id="CHEBI:29034"/>
        <label>2</label>
    </ligand>
</feature>
<feature type="binding site" evidence="2">
    <location>
        <position position="162"/>
    </location>
    <ligand>
        <name>Fe(3+)</name>
        <dbReference type="ChEBI" id="CHEBI:29034"/>
        <label>3</label>
    </ligand>
</feature>
<feature type="binding site" evidence="2">
    <location>
        <position position="165"/>
    </location>
    <ligand>
        <name>Fe(3+)</name>
        <dbReference type="ChEBI" id="CHEBI:29034"/>
        <label>3</label>
    </ligand>
</feature>
<feature type="binding site" evidence="2">
    <location>
        <position position="178"/>
    </location>
    <ligand>
        <name>Fe(3+)</name>
        <dbReference type="ChEBI" id="CHEBI:29034"/>
        <label>3</label>
    </ligand>
</feature>
<feature type="binding site" evidence="2">
    <location>
        <position position="181"/>
    </location>
    <ligand>
        <name>Fe(3+)</name>
        <dbReference type="ChEBI" id="CHEBI:29034"/>
        <label>3</label>
    </ligand>
</feature>
<feature type="sequence conflict" description="In Ref. 1; CAA63429." evidence="5" ref="1">
    <original>I</original>
    <variation>M</variation>
    <location>
        <position position="146"/>
    </location>
</feature>
<feature type="sequence conflict" description="In Ref. 1; CAA63429." evidence="5" ref="1">
    <original>Y</original>
    <variation>F</variation>
    <location>
        <position position="187"/>
    </location>
</feature>
<name>RUBY_CLOPE</name>
<reference key="1">
    <citation type="journal article" date="1996" name="J. Bacteriol.">
        <title>Rubrerythrin from Clostridium perfringens: cloning of the gene, purification of the protein, and characterization of its superoxide dismutase function.</title>
        <authorList>
            <person name="Lehmann Y."/>
            <person name="Meile L."/>
            <person name="Teuber M."/>
        </authorList>
    </citation>
    <scope>NUCLEOTIDE SEQUENCE [GENOMIC DNA]</scope>
    <source>
        <strain>ATCC 10543 / DSM 798 / NCIB 8875 / BP6K / Type A</strain>
    </source>
</reference>
<reference key="2">
    <citation type="journal article" date="2002" name="Proc. Natl. Acad. Sci. U.S.A.">
        <title>Complete genome sequence of Clostridium perfringens, an anaerobic flesh-eater.</title>
        <authorList>
            <person name="Shimizu T."/>
            <person name="Ohtani K."/>
            <person name="Hirakawa H."/>
            <person name="Ohshima K."/>
            <person name="Yamashita A."/>
            <person name="Shiba T."/>
            <person name="Ogasawara N."/>
            <person name="Hattori M."/>
            <person name="Kuhara S."/>
            <person name="Hayashi H."/>
        </authorList>
    </citation>
    <scope>NUCLEOTIDE SEQUENCE [LARGE SCALE GENOMIC DNA]</scope>
    <source>
        <strain>13 / Type A</strain>
    </source>
</reference>
<evidence type="ECO:0000250" key="1"/>
<evidence type="ECO:0000250" key="2">
    <source>
        <dbReference type="UniProtKB" id="P24931"/>
    </source>
</evidence>
<evidence type="ECO:0000255" key="3">
    <source>
        <dbReference type="PROSITE-ProRule" id="PRU00085"/>
    </source>
</evidence>
<evidence type="ECO:0000255" key="4">
    <source>
        <dbReference type="PROSITE-ProRule" id="PRU00241"/>
    </source>
</evidence>
<evidence type="ECO:0000305" key="5"/>
<sequence>MKSLKGTKTAENLMKSFAGECQARTRYTYFSSTARKEGYVQISNIFLETAENEKEHAKRFYKFLKDDLQGEAVEINAAYPVELPTDTLTNLKFAAEGEHDELSNLYPSFADVADEEGFPEVAAAFRMIAKAETAHYNRFMKLAKNIEEGKVFKKDEVVLWKCGNCGFIWEGAEAPLKCPACLHPQAYFEVFKETY</sequence>
<gene>
    <name type="primary">rbr</name>
    <name type="synonym">rubY</name>
    <name type="ordered locus">CPE0135</name>
</gene>
<keyword id="KW-0963">Cytoplasm</keyword>
<keyword id="KW-0249">Electron transport</keyword>
<keyword id="KW-0408">Iron</keyword>
<keyword id="KW-0479">Metal-binding</keyword>
<keyword id="KW-1185">Reference proteome</keyword>
<keyword id="KW-0813">Transport</keyword>
<accession>P51591</accession>